<feature type="transit peptide" description="Chloroplast" evidence="2">
    <location>
        <begin position="1"/>
        <end position="51"/>
    </location>
</feature>
<feature type="chain" id="PRO_0000033629" description="Camphene synthase, chloroplastic">
    <location>
        <begin position="52"/>
        <end position="618"/>
    </location>
</feature>
<feature type="short sequence motif" description="DDXXD motif">
    <location>
        <begin position="369"/>
        <end position="373"/>
    </location>
</feature>
<feature type="binding site" evidence="1">
    <location>
        <position position="369"/>
    </location>
    <ligand>
        <name>Mg(2+)</name>
        <dbReference type="ChEBI" id="CHEBI:18420"/>
        <label>1</label>
    </ligand>
</feature>
<feature type="binding site" evidence="1">
    <location>
        <position position="369"/>
    </location>
    <ligand>
        <name>Mg(2+)</name>
        <dbReference type="ChEBI" id="CHEBI:18420"/>
        <label>2</label>
    </ligand>
</feature>
<feature type="binding site" evidence="1">
    <location>
        <position position="373"/>
    </location>
    <ligand>
        <name>Mg(2+)</name>
        <dbReference type="ChEBI" id="CHEBI:18420"/>
        <label>1</label>
    </ligand>
</feature>
<feature type="binding site" evidence="1">
    <location>
        <position position="373"/>
    </location>
    <ligand>
        <name>Mg(2+)</name>
        <dbReference type="ChEBI" id="CHEBI:18420"/>
        <label>2</label>
    </ligand>
</feature>
<feature type="binding site" evidence="1">
    <location>
        <position position="521"/>
    </location>
    <ligand>
        <name>Mg(2+)</name>
        <dbReference type="ChEBI" id="CHEBI:18420"/>
        <label>3</label>
    </ligand>
</feature>
<dbReference type="EC" id="4.2.3.117"/>
<dbReference type="EMBL" id="U87910">
    <property type="protein sequence ID" value="AAB70707.1"/>
    <property type="molecule type" value="mRNA"/>
</dbReference>
<dbReference type="SMR" id="Q948Z0"/>
<dbReference type="KEGG" id="ag:AAB70707"/>
<dbReference type="BioCyc" id="MetaCyc:AG6-MONOMER"/>
<dbReference type="BRENDA" id="4.2.3.117">
    <property type="organism ID" value="2"/>
</dbReference>
<dbReference type="BRENDA" id="4.2.3.119">
    <property type="organism ID" value="2"/>
</dbReference>
<dbReference type="UniPathway" id="UPA00924"/>
<dbReference type="GO" id="GO:0009507">
    <property type="term" value="C:chloroplast"/>
    <property type="evidence" value="ECO:0007669"/>
    <property type="project" value="UniProtKB-SubCell"/>
</dbReference>
<dbReference type="GO" id="GO:0102703">
    <property type="term" value="F:camphene synthase activity"/>
    <property type="evidence" value="ECO:0007669"/>
    <property type="project" value="UniProtKB-EC"/>
</dbReference>
<dbReference type="GO" id="GO:0000287">
    <property type="term" value="F:magnesium ion binding"/>
    <property type="evidence" value="ECO:0007669"/>
    <property type="project" value="InterPro"/>
</dbReference>
<dbReference type="GO" id="GO:0010333">
    <property type="term" value="F:terpene synthase activity"/>
    <property type="evidence" value="ECO:0007669"/>
    <property type="project" value="InterPro"/>
</dbReference>
<dbReference type="GO" id="GO:0016102">
    <property type="term" value="P:diterpenoid biosynthetic process"/>
    <property type="evidence" value="ECO:0007669"/>
    <property type="project" value="InterPro"/>
</dbReference>
<dbReference type="CDD" id="cd00684">
    <property type="entry name" value="Terpene_cyclase_plant_C1"/>
    <property type="match status" value="1"/>
</dbReference>
<dbReference type="FunFam" id="1.10.600.10:FF:000005">
    <property type="entry name" value="Ent-kaur-16-ene synthase, chloroplastic"/>
    <property type="match status" value="1"/>
</dbReference>
<dbReference type="Gene3D" id="1.10.600.10">
    <property type="entry name" value="Farnesyl Diphosphate Synthase"/>
    <property type="match status" value="1"/>
</dbReference>
<dbReference type="Gene3D" id="1.50.10.130">
    <property type="entry name" value="Terpene synthase, N-terminal domain"/>
    <property type="match status" value="1"/>
</dbReference>
<dbReference type="InterPro" id="IPR008949">
    <property type="entry name" value="Isoprenoid_synthase_dom_sf"/>
</dbReference>
<dbReference type="InterPro" id="IPR034741">
    <property type="entry name" value="Terpene_cyclase-like_1_C"/>
</dbReference>
<dbReference type="InterPro" id="IPR044814">
    <property type="entry name" value="Terpene_cyclase_plant_C1"/>
</dbReference>
<dbReference type="InterPro" id="IPR001906">
    <property type="entry name" value="Terpene_synth_N"/>
</dbReference>
<dbReference type="InterPro" id="IPR036965">
    <property type="entry name" value="Terpene_synth_N_sf"/>
</dbReference>
<dbReference type="InterPro" id="IPR050148">
    <property type="entry name" value="Terpene_synthase-like"/>
</dbReference>
<dbReference type="InterPro" id="IPR005630">
    <property type="entry name" value="Terpene_synthase_metal-bd"/>
</dbReference>
<dbReference type="InterPro" id="IPR008930">
    <property type="entry name" value="Terpenoid_cyclase/PrenylTrfase"/>
</dbReference>
<dbReference type="PANTHER" id="PTHR31225">
    <property type="entry name" value="OS04G0344100 PROTEIN-RELATED"/>
    <property type="match status" value="1"/>
</dbReference>
<dbReference type="PANTHER" id="PTHR31225:SF137">
    <property type="entry name" value="TERPENE SYNTHASE 11-RELATED"/>
    <property type="match status" value="1"/>
</dbReference>
<dbReference type="Pfam" id="PF01397">
    <property type="entry name" value="Terpene_synth"/>
    <property type="match status" value="1"/>
</dbReference>
<dbReference type="Pfam" id="PF03936">
    <property type="entry name" value="Terpene_synth_C"/>
    <property type="match status" value="1"/>
</dbReference>
<dbReference type="SFLD" id="SFLDS00005">
    <property type="entry name" value="Isoprenoid_Synthase_Type_I"/>
    <property type="match status" value="1"/>
</dbReference>
<dbReference type="SFLD" id="SFLDG01019">
    <property type="entry name" value="Terpene_Cyclase_Like_1_C_Termi"/>
    <property type="match status" value="1"/>
</dbReference>
<dbReference type="SFLD" id="SFLDG01014">
    <property type="entry name" value="Terpene_Cyclase_Like_1_N-term"/>
    <property type="match status" value="1"/>
</dbReference>
<dbReference type="SUPFAM" id="SSF48239">
    <property type="entry name" value="Terpenoid cyclases/Protein prenyltransferases"/>
    <property type="match status" value="1"/>
</dbReference>
<dbReference type="SUPFAM" id="SSF48576">
    <property type="entry name" value="Terpenoid synthases"/>
    <property type="match status" value="1"/>
</dbReference>
<gene>
    <name type="primary">ag6</name>
    <name type="synonym">AG6.5</name>
</gene>
<name>TPSD6_ABIGR</name>
<evidence type="ECO:0000250" key="1"/>
<evidence type="ECO:0000255" key="2"/>
<evidence type="ECO:0000269" key="3">
    <source>
    </source>
</evidence>
<evidence type="ECO:0000269" key="4">
    <source>
    </source>
</evidence>
<evidence type="ECO:0000269" key="5">
    <source>
    </source>
</evidence>
<evidence type="ECO:0000305" key="6"/>
<protein>
    <recommendedName>
        <fullName>Camphene synthase, chloroplastic</fullName>
        <ecNumber>4.2.3.117</ecNumber>
    </recommendedName>
    <alternativeName>
        <fullName>(-)-(1S,4R)-camphene synthase</fullName>
    </alternativeName>
    <alternativeName>
        <fullName>Agg-cam</fullName>
    </alternativeName>
</protein>
<organism>
    <name type="scientific">Abies grandis</name>
    <name type="common">Grand fir</name>
    <name type="synonym">Pinus grandis</name>
    <dbReference type="NCBI Taxonomy" id="46611"/>
    <lineage>
        <taxon>Eukaryota</taxon>
        <taxon>Viridiplantae</taxon>
        <taxon>Streptophyta</taxon>
        <taxon>Embryophyta</taxon>
        <taxon>Tracheophyta</taxon>
        <taxon>Spermatophyta</taxon>
        <taxon>Pinopsida</taxon>
        <taxon>Pinidae</taxon>
        <taxon>Conifers I</taxon>
        <taxon>Pinales</taxon>
        <taxon>Pinaceae</taxon>
        <taxon>Abies</taxon>
    </lineage>
</organism>
<comment type="function">
    <text evidence="3 4 5">Involved in defensive oleoresin formation in conifers in response to insect attack or other injury. Involved in monoterpene (C10) olefins biosynthesis.</text>
</comment>
<comment type="catalytic activity">
    <reaction evidence="3">
        <text>(2E)-geranyl diphosphate = (1S,4R)-camphene + diphosphate</text>
        <dbReference type="Rhea" id="RHEA:25484"/>
        <dbReference type="ChEBI" id="CHEBI:89"/>
        <dbReference type="ChEBI" id="CHEBI:33019"/>
        <dbReference type="ChEBI" id="CHEBI:58057"/>
        <dbReference type="EC" id="4.2.3.117"/>
    </reaction>
</comment>
<comment type="cofactor">
    <cofactor evidence="1">
        <name>Mg(2+)</name>
        <dbReference type="ChEBI" id="CHEBI:18420"/>
    </cofactor>
    <cofactor evidence="1">
        <name>Mn(2+)</name>
        <dbReference type="ChEBI" id="CHEBI:29035"/>
    </cofactor>
    <text evidence="1">Binds 3 Mg(2+) or Mn(2+) ions per subunit.</text>
</comment>
<comment type="cofactor">
    <cofactor evidence="1">
        <name>K(+)</name>
        <dbReference type="ChEBI" id="CHEBI:29103"/>
    </cofactor>
</comment>
<comment type="pathway">
    <text>Terpene metabolism; oleoresin biosynthesis.</text>
</comment>
<comment type="subcellular location">
    <subcellularLocation>
        <location evidence="1">Plastid</location>
        <location evidence="1">Chloroplast</location>
    </subcellularLocation>
</comment>
<comment type="domain">
    <text>The Asp-Asp-Xaa-Xaa-Asp/Glu (DDXXD/E) motif is important for the catalytic activity, presumably through binding to Mg(2+).</text>
</comment>
<comment type="miscellaneous">
    <text>The conserved 59-Arg-Arg-60 motif may play a role in the isomerization step of the terpenoid cyclization reaction sequence.</text>
</comment>
<comment type="similarity">
    <text evidence="6">Belongs to the terpene synthase family. Tpsd subfamily.</text>
</comment>
<accession>Q948Z0</accession>
<reference key="1">
    <citation type="journal article" date="1997" name="J. Biol. Chem.">
        <title>Monoterpene synthases from grand fir (Abies grandis). cDNA isolation, characterization, and functional expression of myrcene synthase, (-)-(4S)-limonene synthase, and (-)-(1S,5S)-pinene synthase.</title>
        <authorList>
            <person name="Bohlmann J."/>
            <person name="Steele C.L."/>
            <person name="Croteau R.B."/>
        </authorList>
    </citation>
    <scope>NUCLEOTIDE SEQUENCE [MRNA]</scope>
</reference>
<reference key="2">
    <citation type="journal article" date="1999" name="Arch. Biochem. Biophys.">
        <title>cDNA cloning, characterization, and functional expression of four new monoterpene synthase members of the Tpsd gene family from grand fir (Abies grandis).</title>
        <authorList>
            <person name="Bohlmann J."/>
            <person name="Phillips M."/>
            <person name="Ramachandiran V."/>
            <person name="Katoh S."/>
            <person name="Croteau R.B."/>
        </authorList>
    </citation>
    <scope>NUCLEOTIDE SEQUENCE [MRNA]</scope>
    <scope>FUNCTION</scope>
    <scope>CATALYTIC ACTIVITY</scope>
    <source>
        <tissue>Stem</tissue>
    </source>
</reference>
<reference key="3">
    <citation type="journal article" date="1998" name="Proc. Natl. Acad. Sci. U.S.A.">
        <title>Plant terpenoid synthases: molecular biology and phylogenetic analysis.</title>
        <authorList>
            <person name="Bohlmann J."/>
            <person name="Meyer-Gauen G."/>
            <person name="Croteau R.B."/>
        </authorList>
    </citation>
    <scope>GENE FAMILY</scope>
    <scope>NOMENCLATURE</scope>
    <scope>FUNCTION</scope>
</reference>
<reference key="4">
    <citation type="journal article" date="2001" name="Genetics">
        <title>Genomic organization of plant terpene synthases and molecular evolutionary implications.</title>
        <authorList>
            <person name="Trapp S.C."/>
            <person name="Croteau R.B."/>
        </authorList>
    </citation>
    <scope>GENE FAMILY</scope>
    <scope>NOMENCLATURE</scope>
    <scope>FUNCTION</scope>
</reference>
<proteinExistence type="evidence at protein level"/>
<keyword id="KW-0150">Chloroplast</keyword>
<keyword id="KW-0456">Lyase</keyword>
<keyword id="KW-0460">Magnesium</keyword>
<keyword id="KW-0464">Manganese</keyword>
<keyword id="KW-0479">Metal-binding</keyword>
<keyword id="KW-0934">Plastid</keyword>
<keyword id="KW-0809">Transit peptide</keyword>
<sequence>MALLSITPLVSRSCLSSSHEIKALRRTIPTLGICRPGKSVAHSINMCLTSVASTDSVQRRVGNYHSNLWDDDFIQSLISTPYGAPDYRERADRLIGEVKDIMFNFKSLEDGGNDLLQRLLLVDDVERLGIDRHFKKEIKTALDYVNSYWNEKGIGCGRESVVTDLNSTALGLRTLRLHGYTVSSDVLNVFKDKNGQFSSTANIQIEGEIRGVLNLFRASLVAFPGEKVMDEAETFSTKYLREALQKIPASSILSLEIRDVLEYGWHTNLPRLEARNYMDVFGQHTKNKNAAEKLLELAKLEFNIFHSLQERELKHVSRWWKDSGSPEMTFCRHRHVEYYALASCIAFEPQHSGFRLGFTKMSHLITVLDDMYDVFGTVDELELFTATIKRWDPSAMECLPEYMKGVYMMVYHTVNEMARVAEKAQGRDTLNYARQAWEACFDSYMQEAKWIATGYLPTFEEYLENGKVSSAHRPCALQPILTLDIPFPDHILKEVDFPSKLNDLICIILRLRGDTRCYKADRARGEEASSISCYMKDNPGLTEEDALNHINFMIRDAIRELNWELLKPDNSVPITSKKHAFDISRVWHHGYRYRDGYSFANVETKSLVMRTVIEPVPL</sequence>